<feature type="chain" id="PRO_0000395481" description="A-kinase anchor protein 9">
    <location>
        <begin position="1"/>
        <end position="3797"/>
    </location>
</feature>
<feature type="region of interest" description="Disordered" evidence="5">
    <location>
        <begin position="1"/>
        <end position="140"/>
    </location>
</feature>
<feature type="region of interest" description="Disordered" evidence="5">
    <location>
        <begin position="1643"/>
        <end position="1668"/>
    </location>
</feature>
<feature type="region of interest" description="Disordered" evidence="5">
    <location>
        <begin position="2323"/>
        <end position="2343"/>
    </location>
</feature>
<feature type="region of interest" description="Disordered" evidence="5">
    <location>
        <begin position="2419"/>
        <end position="2454"/>
    </location>
</feature>
<feature type="region of interest" description="PKA-RII subunit binding domain" evidence="1">
    <location>
        <begin position="2498"/>
        <end position="2510"/>
    </location>
</feature>
<feature type="region of interest" description="Disordered" evidence="5">
    <location>
        <begin position="2604"/>
        <end position="2695"/>
    </location>
</feature>
<feature type="region of interest" description="Disordered" evidence="5">
    <location>
        <begin position="3271"/>
        <end position="3296"/>
    </location>
</feature>
<feature type="coiled-coil region" evidence="4">
    <location>
        <begin position="140"/>
        <end position="607"/>
    </location>
</feature>
<feature type="coiled-coil region" evidence="4">
    <location>
        <begin position="640"/>
        <end position="976"/>
    </location>
</feature>
<feature type="coiled-coil region" evidence="4">
    <location>
        <begin position="1808"/>
        <end position="2377"/>
    </location>
</feature>
<feature type="coiled-coil region" evidence="4">
    <location>
        <begin position="2975"/>
        <end position="3325"/>
    </location>
</feature>
<feature type="compositionally biased region" description="Polar residues" evidence="5">
    <location>
        <begin position="50"/>
        <end position="65"/>
    </location>
</feature>
<feature type="compositionally biased region" description="Polar residues" evidence="5">
    <location>
        <begin position="92"/>
        <end position="108"/>
    </location>
</feature>
<feature type="compositionally biased region" description="Basic and acidic residues" evidence="5">
    <location>
        <begin position="115"/>
        <end position="124"/>
    </location>
</feature>
<feature type="compositionally biased region" description="Basic and acidic residues" evidence="5">
    <location>
        <begin position="1648"/>
        <end position="1668"/>
    </location>
</feature>
<feature type="compositionally biased region" description="Basic and acidic residues" evidence="5">
    <location>
        <begin position="2328"/>
        <end position="2343"/>
    </location>
</feature>
<feature type="compositionally biased region" description="Polar residues" evidence="5">
    <location>
        <begin position="2438"/>
        <end position="2454"/>
    </location>
</feature>
<feature type="compositionally biased region" description="Acidic residues" evidence="5">
    <location>
        <begin position="2606"/>
        <end position="2615"/>
    </location>
</feature>
<feature type="compositionally biased region" description="Basic and acidic residues" evidence="5">
    <location>
        <begin position="2642"/>
        <end position="2669"/>
    </location>
</feature>
<feature type="compositionally biased region" description="Polar residues" evidence="5">
    <location>
        <begin position="3279"/>
        <end position="3294"/>
    </location>
</feature>
<feature type="modified residue" description="Phosphoserine" evidence="3">
    <location>
        <position position="139"/>
    </location>
</feature>
<feature type="modified residue" description="Phosphoserine" evidence="3">
    <location>
        <position position="1288"/>
    </location>
</feature>
<feature type="modified residue" description="Phosphoserine" evidence="3">
    <location>
        <position position="3732"/>
    </location>
</feature>
<feature type="modified residue" description="Phosphoserine" evidence="3">
    <location>
        <position position="3755"/>
    </location>
</feature>
<feature type="modified residue" description="Phosphoserine" evidence="3">
    <location>
        <position position="3787"/>
    </location>
</feature>
<feature type="splice variant" id="VSP_039481" description="In isoform 2." evidence="7">
    <location>
        <begin position="104"/>
        <end position="121"/>
    </location>
</feature>
<feature type="splice variant" id="VSP_039482" description="In isoform 3." evidence="6">
    <location>
        <begin position="3436"/>
        <end position="3454"/>
    </location>
</feature>
<feature type="sequence conflict" description="In Ref. 1; CAE46960." evidence="8" ref="1">
    <original>S</original>
    <variation>N</variation>
    <location>
        <position position="62"/>
    </location>
</feature>
<feature type="sequence conflict" description="In Ref. 1; CAE46960." evidence="8" ref="1">
    <original>S</original>
    <variation>L</variation>
    <location>
        <position position="2388"/>
    </location>
</feature>
<feature type="sequence conflict" description="In Ref. 1; CAE46960." evidence="8" ref="1">
    <original>L</original>
    <variation>Q</variation>
    <location>
        <position position="2775"/>
    </location>
</feature>
<dbReference type="EMBL" id="AJ582913">
    <property type="protein sequence ID" value="CAE46960.1"/>
    <property type="molecule type" value="mRNA"/>
</dbReference>
<dbReference type="EMBL" id="AK122374">
    <property type="protein sequence ID" value="BAC65656.2"/>
    <property type="molecule type" value="Transcribed_RNA"/>
</dbReference>
<dbReference type="EMBL" id="AK168404">
    <property type="protein sequence ID" value="BAE40324.1"/>
    <property type="molecule type" value="mRNA"/>
</dbReference>
<dbReference type="CCDS" id="CCDS19070.1">
    <molecule id="Q70FJ1-2"/>
</dbReference>
<dbReference type="RefSeq" id="NP_919444.2">
    <property type="nucleotide sequence ID" value="NM_194462.2"/>
</dbReference>
<dbReference type="BioGRID" id="221564">
    <property type="interactions" value="21"/>
</dbReference>
<dbReference type="CORUM" id="Q70FJ1"/>
<dbReference type="FunCoup" id="Q70FJ1">
    <property type="interactions" value="1037"/>
</dbReference>
<dbReference type="IntAct" id="Q70FJ1">
    <property type="interactions" value="7"/>
</dbReference>
<dbReference type="MINT" id="Q70FJ1"/>
<dbReference type="STRING" id="10090.ENSMUSP00000046129"/>
<dbReference type="GlyGen" id="Q70FJ1">
    <property type="glycosylation" value="3 sites, 2 N-linked glycans (2 sites)"/>
</dbReference>
<dbReference type="iPTMnet" id="Q70FJ1"/>
<dbReference type="PhosphoSitePlus" id="Q70FJ1"/>
<dbReference type="jPOST" id="Q70FJ1"/>
<dbReference type="PaxDb" id="10090-ENSMUSP00000046129"/>
<dbReference type="PeptideAtlas" id="Q70FJ1"/>
<dbReference type="ProteomicsDB" id="282060">
    <molecule id="Q70FJ1-1"/>
</dbReference>
<dbReference type="ProteomicsDB" id="282061">
    <molecule id="Q70FJ1-2"/>
</dbReference>
<dbReference type="ProteomicsDB" id="282062">
    <molecule id="Q70FJ1-3"/>
</dbReference>
<dbReference type="Pumba" id="Q70FJ1"/>
<dbReference type="DNASU" id="100986"/>
<dbReference type="GeneID" id="100986"/>
<dbReference type="KEGG" id="mmu:100986"/>
<dbReference type="AGR" id="MGI:2178217"/>
<dbReference type="CTD" id="10142"/>
<dbReference type="MGI" id="MGI:2178217">
    <property type="gene designation" value="Akap9"/>
</dbReference>
<dbReference type="eggNOG" id="ENOG502QV16">
    <property type="taxonomic scope" value="Eukaryota"/>
</dbReference>
<dbReference type="InParanoid" id="Q70FJ1"/>
<dbReference type="PhylomeDB" id="Q70FJ1"/>
<dbReference type="Reactome" id="R-MMU-2565942">
    <property type="pathway name" value="Regulation of PLK1 Activity at G2/M Transition"/>
</dbReference>
<dbReference type="Reactome" id="R-MMU-380259">
    <property type="pathway name" value="Loss of Nlp from mitotic centrosomes"/>
</dbReference>
<dbReference type="Reactome" id="R-MMU-380270">
    <property type="pathway name" value="Recruitment of mitotic centrosome proteins and complexes"/>
</dbReference>
<dbReference type="Reactome" id="R-MMU-380284">
    <property type="pathway name" value="Loss of proteins required for interphase microtubule organization from the centrosome"/>
</dbReference>
<dbReference type="Reactome" id="R-MMU-380320">
    <property type="pathway name" value="Recruitment of NuMA to mitotic centrosomes"/>
</dbReference>
<dbReference type="Reactome" id="R-MMU-5576890">
    <property type="pathway name" value="Phase 3 - rapid repolarisation"/>
</dbReference>
<dbReference type="Reactome" id="R-MMU-5576893">
    <property type="pathway name" value="Phase 2 - plateau phase"/>
</dbReference>
<dbReference type="Reactome" id="R-MMU-5620912">
    <property type="pathway name" value="Anchoring of the basal body to the plasma membrane"/>
</dbReference>
<dbReference type="Reactome" id="R-MMU-8854518">
    <property type="pathway name" value="AURKA Activation by TPX2"/>
</dbReference>
<dbReference type="BioGRID-ORCS" id="100986">
    <property type="hits" value="4 hits in 78 CRISPR screens"/>
</dbReference>
<dbReference type="CD-CODE" id="01CA17F3">
    <property type="entry name" value="Centrosome"/>
</dbReference>
<dbReference type="ChiTaRS" id="Akap9">
    <property type="organism name" value="mouse"/>
</dbReference>
<dbReference type="PRO" id="PR:Q70FJ1"/>
<dbReference type="Proteomes" id="UP000000589">
    <property type="component" value="Unplaced"/>
</dbReference>
<dbReference type="RNAct" id="Q70FJ1">
    <property type="molecule type" value="protein"/>
</dbReference>
<dbReference type="GO" id="GO:0097729">
    <property type="term" value="C:9+2 motile cilium"/>
    <property type="evidence" value="ECO:0000314"/>
    <property type="project" value="MGI"/>
</dbReference>
<dbReference type="GO" id="GO:0005813">
    <property type="term" value="C:centrosome"/>
    <property type="evidence" value="ECO:0000314"/>
    <property type="project" value="MGI"/>
</dbReference>
<dbReference type="GO" id="GO:0036064">
    <property type="term" value="C:ciliary basal body"/>
    <property type="evidence" value="ECO:0000314"/>
    <property type="project" value="MGI"/>
</dbReference>
<dbReference type="GO" id="GO:0005737">
    <property type="term" value="C:cytoplasm"/>
    <property type="evidence" value="ECO:0000314"/>
    <property type="project" value="MGI"/>
</dbReference>
<dbReference type="GO" id="GO:0097386">
    <property type="term" value="C:glial cell projection"/>
    <property type="evidence" value="ECO:0000314"/>
    <property type="project" value="MGI"/>
</dbReference>
<dbReference type="GO" id="GO:0005794">
    <property type="term" value="C:Golgi apparatus"/>
    <property type="evidence" value="ECO:0000314"/>
    <property type="project" value="MGI"/>
</dbReference>
<dbReference type="GO" id="GO:0005795">
    <property type="term" value="C:Golgi stack"/>
    <property type="evidence" value="ECO:0000250"/>
    <property type="project" value="UniProtKB"/>
</dbReference>
<dbReference type="GO" id="GO:0000242">
    <property type="term" value="C:pericentriolar material"/>
    <property type="evidence" value="ECO:0000314"/>
    <property type="project" value="MGI"/>
</dbReference>
<dbReference type="GO" id="GO:0034705">
    <property type="term" value="C:potassium channel complex"/>
    <property type="evidence" value="ECO:0000266"/>
    <property type="project" value="MGI"/>
</dbReference>
<dbReference type="GO" id="GO:0120219">
    <property type="term" value="C:subapical part of cell"/>
    <property type="evidence" value="ECO:0000314"/>
    <property type="project" value="MGI"/>
</dbReference>
<dbReference type="GO" id="GO:0060090">
    <property type="term" value="F:molecular adaptor activity"/>
    <property type="evidence" value="ECO:0000250"/>
    <property type="project" value="UniProtKB"/>
</dbReference>
<dbReference type="GO" id="GO:0034237">
    <property type="term" value="F:protein kinase A regulatory subunit binding"/>
    <property type="evidence" value="ECO:0000266"/>
    <property type="project" value="MGI"/>
</dbReference>
<dbReference type="GO" id="GO:0051661">
    <property type="term" value="P:maintenance of centrosome location"/>
    <property type="evidence" value="ECO:0000250"/>
    <property type="project" value="UniProtKB"/>
</dbReference>
<dbReference type="GO" id="GO:0007020">
    <property type="term" value="P:microtubule nucleation"/>
    <property type="evidence" value="ECO:0000250"/>
    <property type="project" value="UniProtKB"/>
</dbReference>
<dbReference type="GO" id="GO:0031503">
    <property type="term" value="P:protein-containing complex localization"/>
    <property type="evidence" value="ECO:0000266"/>
    <property type="project" value="MGI"/>
</dbReference>
<dbReference type="GO" id="GO:1903358">
    <property type="term" value="P:regulation of Golgi organization"/>
    <property type="evidence" value="ECO:0000250"/>
    <property type="project" value="UniProtKB"/>
</dbReference>
<dbReference type="GO" id="GO:0060009">
    <property type="term" value="P:Sertoli cell development"/>
    <property type="evidence" value="ECO:0000315"/>
    <property type="project" value="MGI"/>
</dbReference>
<dbReference type="GO" id="GO:0007165">
    <property type="term" value="P:signal transduction"/>
    <property type="evidence" value="ECO:0007669"/>
    <property type="project" value="InterPro"/>
</dbReference>
<dbReference type="GO" id="GO:0007283">
    <property type="term" value="P:spermatogenesis"/>
    <property type="evidence" value="ECO:0000315"/>
    <property type="project" value="MGI"/>
</dbReference>
<dbReference type="InterPro" id="IPR028745">
    <property type="entry name" value="AKAP9/Pericentrin"/>
</dbReference>
<dbReference type="InterPro" id="IPR019528">
    <property type="entry name" value="PACT_domain"/>
</dbReference>
<dbReference type="PANTHER" id="PTHR44981:SF1">
    <property type="entry name" value="A-KINASE ANCHOR PROTEIN 9"/>
    <property type="match status" value="1"/>
</dbReference>
<dbReference type="PANTHER" id="PTHR44981">
    <property type="entry name" value="PERICENTRIN-LIKE PROTEIN, ISOFORM F"/>
    <property type="match status" value="1"/>
</dbReference>
<dbReference type="Pfam" id="PF10495">
    <property type="entry name" value="PACT_coil_coil"/>
    <property type="match status" value="1"/>
</dbReference>
<reference key="1">
    <citation type="submission" date="2003-09" db="EMBL/GenBank/DDBJ databases">
        <title>Cloning mouse AKAP9.</title>
        <authorList>
            <person name="Kemmner W.A."/>
        </authorList>
    </citation>
    <scope>NUCLEOTIDE SEQUENCE [MRNA] (ISOFORM 2)</scope>
    <source>
        <strain>BALB/cJ</strain>
        <tissue>Brain</tissue>
    </source>
</reference>
<reference key="2">
    <citation type="journal article" date="2003" name="DNA Res.">
        <title>Prediction of the coding sequences of mouse homologues of KIAA gene: II. The complete nucleotide sequences of 400 mouse KIAA-homologous cDNAs identified by screening of terminal sequences of cDNA clones randomly sampled from size-fractionated libraries.</title>
        <authorList>
            <person name="Okazaki N."/>
            <person name="Kikuno R."/>
            <person name="Ohara R."/>
            <person name="Inamoto S."/>
            <person name="Aizawa H."/>
            <person name="Yuasa S."/>
            <person name="Nakajima D."/>
            <person name="Nagase T."/>
            <person name="Ohara O."/>
            <person name="Koga H."/>
        </authorList>
    </citation>
    <scope>NUCLEOTIDE SEQUENCE [LARGE SCALE MRNA] (ISOFORM 3)</scope>
    <source>
        <tissue>Brain</tissue>
    </source>
</reference>
<reference key="3">
    <citation type="journal article" date="2005" name="Science">
        <title>The transcriptional landscape of the mammalian genome.</title>
        <authorList>
            <person name="Carninci P."/>
            <person name="Kasukawa T."/>
            <person name="Katayama S."/>
            <person name="Gough J."/>
            <person name="Frith M.C."/>
            <person name="Maeda N."/>
            <person name="Oyama R."/>
            <person name="Ravasi T."/>
            <person name="Lenhard B."/>
            <person name="Wells C."/>
            <person name="Kodzius R."/>
            <person name="Shimokawa K."/>
            <person name="Bajic V.B."/>
            <person name="Brenner S.E."/>
            <person name="Batalov S."/>
            <person name="Forrest A.R."/>
            <person name="Zavolan M."/>
            <person name="Davis M.J."/>
            <person name="Wilming L.G."/>
            <person name="Aidinis V."/>
            <person name="Allen J.E."/>
            <person name="Ambesi-Impiombato A."/>
            <person name="Apweiler R."/>
            <person name="Aturaliya R.N."/>
            <person name="Bailey T.L."/>
            <person name="Bansal M."/>
            <person name="Baxter L."/>
            <person name="Beisel K.W."/>
            <person name="Bersano T."/>
            <person name="Bono H."/>
            <person name="Chalk A.M."/>
            <person name="Chiu K.P."/>
            <person name="Choudhary V."/>
            <person name="Christoffels A."/>
            <person name="Clutterbuck D.R."/>
            <person name="Crowe M.L."/>
            <person name="Dalla E."/>
            <person name="Dalrymple B.P."/>
            <person name="de Bono B."/>
            <person name="Della Gatta G."/>
            <person name="di Bernardo D."/>
            <person name="Down T."/>
            <person name="Engstrom P."/>
            <person name="Fagiolini M."/>
            <person name="Faulkner G."/>
            <person name="Fletcher C.F."/>
            <person name="Fukushima T."/>
            <person name="Furuno M."/>
            <person name="Futaki S."/>
            <person name="Gariboldi M."/>
            <person name="Georgii-Hemming P."/>
            <person name="Gingeras T.R."/>
            <person name="Gojobori T."/>
            <person name="Green R.E."/>
            <person name="Gustincich S."/>
            <person name="Harbers M."/>
            <person name="Hayashi Y."/>
            <person name="Hensch T.K."/>
            <person name="Hirokawa N."/>
            <person name="Hill D."/>
            <person name="Huminiecki L."/>
            <person name="Iacono M."/>
            <person name="Ikeo K."/>
            <person name="Iwama A."/>
            <person name="Ishikawa T."/>
            <person name="Jakt M."/>
            <person name="Kanapin A."/>
            <person name="Katoh M."/>
            <person name="Kawasawa Y."/>
            <person name="Kelso J."/>
            <person name="Kitamura H."/>
            <person name="Kitano H."/>
            <person name="Kollias G."/>
            <person name="Krishnan S.P."/>
            <person name="Kruger A."/>
            <person name="Kummerfeld S.K."/>
            <person name="Kurochkin I.V."/>
            <person name="Lareau L.F."/>
            <person name="Lazarevic D."/>
            <person name="Lipovich L."/>
            <person name="Liu J."/>
            <person name="Liuni S."/>
            <person name="McWilliam S."/>
            <person name="Madan Babu M."/>
            <person name="Madera M."/>
            <person name="Marchionni L."/>
            <person name="Matsuda H."/>
            <person name="Matsuzawa S."/>
            <person name="Miki H."/>
            <person name="Mignone F."/>
            <person name="Miyake S."/>
            <person name="Morris K."/>
            <person name="Mottagui-Tabar S."/>
            <person name="Mulder N."/>
            <person name="Nakano N."/>
            <person name="Nakauchi H."/>
            <person name="Ng P."/>
            <person name="Nilsson R."/>
            <person name="Nishiguchi S."/>
            <person name="Nishikawa S."/>
            <person name="Nori F."/>
            <person name="Ohara O."/>
            <person name="Okazaki Y."/>
            <person name="Orlando V."/>
            <person name="Pang K.C."/>
            <person name="Pavan W.J."/>
            <person name="Pavesi G."/>
            <person name="Pesole G."/>
            <person name="Petrovsky N."/>
            <person name="Piazza S."/>
            <person name="Reed J."/>
            <person name="Reid J.F."/>
            <person name="Ring B.Z."/>
            <person name="Ringwald M."/>
            <person name="Rost B."/>
            <person name="Ruan Y."/>
            <person name="Salzberg S.L."/>
            <person name="Sandelin A."/>
            <person name="Schneider C."/>
            <person name="Schoenbach C."/>
            <person name="Sekiguchi K."/>
            <person name="Semple C.A."/>
            <person name="Seno S."/>
            <person name="Sessa L."/>
            <person name="Sheng Y."/>
            <person name="Shibata Y."/>
            <person name="Shimada H."/>
            <person name="Shimada K."/>
            <person name="Silva D."/>
            <person name="Sinclair B."/>
            <person name="Sperling S."/>
            <person name="Stupka E."/>
            <person name="Sugiura K."/>
            <person name="Sultana R."/>
            <person name="Takenaka Y."/>
            <person name="Taki K."/>
            <person name="Tammoja K."/>
            <person name="Tan S.L."/>
            <person name="Tang S."/>
            <person name="Taylor M.S."/>
            <person name="Tegner J."/>
            <person name="Teichmann S.A."/>
            <person name="Ueda H.R."/>
            <person name="van Nimwegen E."/>
            <person name="Verardo R."/>
            <person name="Wei C.L."/>
            <person name="Yagi K."/>
            <person name="Yamanishi H."/>
            <person name="Zabarovsky E."/>
            <person name="Zhu S."/>
            <person name="Zimmer A."/>
            <person name="Hide W."/>
            <person name="Bult C."/>
            <person name="Grimmond S.M."/>
            <person name="Teasdale R.D."/>
            <person name="Liu E.T."/>
            <person name="Brusic V."/>
            <person name="Quackenbush J."/>
            <person name="Wahlestedt C."/>
            <person name="Mattick J.S."/>
            <person name="Hume D.A."/>
            <person name="Kai C."/>
            <person name="Sasaki D."/>
            <person name="Tomaru Y."/>
            <person name="Fukuda S."/>
            <person name="Kanamori-Katayama M."/>
            <person name="Suzuki M."/>
            <person name="Aoki J."/>
            <person name="Arakawa T."/>
            <person name="Iida J."/>
            <person name="Imamura K."/>
            <person name="Itoh M."/>
            <person name="Kato T."/>
            <person name="Kawaji H."/>
            <person name="Kawagashira N."/>
            <person name="Kawashima T."/>
            <person name="Kojima M."/>
            <person name="Kondo S."/>
            <person name="Konno H."/>
            <person name="Nakano K."/>
            <person name="Ninomiya N."/>
            <person name="Nishio T."/>
            <person name="Okada M."/>
            <person name="Plessy C."/>
            <person name="Shibata K."/>
            <person name="Shiraki T."/>
            <person name="Suzuki S."/>
            <person name="Tagami M."/>
            <person name="Waki K."/>
            <person name="Watahiki A."/>
            <person name="Okamura-Oho Y."/>
            <person name="Suzuki H."/>
            <person name="Kawai J."/>
            <person name="Hayashizaki Y."/>
        </authorList>
    </citation>
    <scope>NUCLEOTIDE SEQUENCE [LARGE SCALE MRNA] OF 1-582 (ISOFORM 1)</scope>
    <source>
        <strain>C57BL/6J</strain>
        <tissue>Stomach</tissue>
    </source>
</reference>
<reference key="4">
    <citation type="journal article" date="2010" name="Cell">
        <title>A tissue-specific atlas of mouse protein phosphorylation and expression.</title>
        <authorList>
            <person name="Huttlin E.L."/>
            <person name="Jedrychowski M.P."/>
            <person name="Elias J.E."/>
            <person name="Goswami T."/>
            <person name="Rad R."/>
            <person name="Beausoleil S.A."/>
            <person name="Villen J."/>
            <person name="Haas W."/>
            <person name="Sowa M.E."/>
            <person name="Gygi S.P."/>
        </authorList>
    </citation>
    <scope>IDENTIFICATION BY MASS SPECTROMETRY [LARGE SCALE ANALYSIS]</scope>
    <source>
        <tissue>Brain</tissue>
        <tissue>Brown adipose tissue</tissue>
        <tissue>Kidney</tissue>
        <tissue>Liver</tissue>
        <tissue>Lung</tissue>
        <tissue>Pancreas</tissue>
        <tissue>Spleen</tissue>
        <tissue>Testis</tissue>
    </source>
</reference>
<gene>
    <name type="primary">Akap9</name>
    <name type="synonym">Kiaa0803</name>
</gene>
<organism>
    <name type="scientific">Mus musculus</name>
    <name type="common">Mouse</name>
    <dbReference type="NCBI Taxonomy" id="10090"/>
    <lineage>
        <taxon>Eukaryota</taxon>
        <taxon>Metazoa</taxon>
        <taxon>Chordata</taxon>
        <taxon>Craniata</taxon>
        <taxon>Vertebrata</taxon>
        <taxon>Euteleostomi</taxon>
        <taxon>Mammalia</taxon>
        <taxon>Eutheria</taxon>
        <taxon>Euarchontoglires</taxon>
        <taxon>Glires</taxon>
        <taxon>Rodentia</taxon>
        <taxon>Myomorpha</taxon>
        <taxon>Muroidea</taxon>
        <taxon>Muridae</taxon>
        <taxon>Murinae</taxon>
        <taxon>Mus</taxon>
        <taxon>Mus</taxon>
    </lineage>
</organism>
<protein>
    <recommendedName>
        <fullName>A-kinase anchor protein 9</fullName>
        <shortName>AKAP-9</shortName>
    </recommendedName>
    <alternativeName>
        <fullName>Protein kinase A-anchoring protein 9</fullName>
        <shortName>PRKA9</shortName>
    </alternativeName>
</protein>
<evidence type="ECO:0000250" key="1"/>
<evidence type="ECO:0000250" key="2">
    <source>
        <dbReference type="UniProtKB" id="Q28628"/>
    </source>
</evidence>
<evidence type="ECO:0000250" key="3">
    <source>
        <dbReference type="UniProtKB" id="Q99996"/>
    </source>
</evidence>
<evidence type="ECO:0000255" key="4"/>
<evidence type="ECO:0000256" key="5">
    <source>
        <dbReference type="SAM" id="MobiDB-lite"/>
    </source>
</evidence>
<evidence type="ECO:0000303" key="6">
    <source>
    </source>
</evidence>
<evidence type="ECO:0000303" key="7">
    <source ref="1"/>
</evidence>
<evidence type="ECO:0000305" key="8"/>
<keyword id="KW-0025">Alternative splicing</keyword>
<keyword id="KW-0175">Coiled coil</keyword>
<keyword id="KW-0963">Cytoplasm</keyword>
<keyword id="KW-0206">Cytoskeleton</keyword>
<keyword id="KW-0333">Golgi apparatus</keyword>
<keyword id="KW-0597">Phosphoprotein</keyword>
<keyword id="KW-1185">Reference proteome</keyword>
<sequence>MEDEERQRKLAAGKAKLARFRQRKAQYDGDIPKKQKKKRTSSSKHDSSLHTDQQSGELCSESSQRVDLAGNPDCSGPERKHGQVFSAEPESEISTTADECSSEINGCNSVMKPRKPTDPLREEEFSLDDSSSEQGAQSSQTCLQMVEKELAEKQHDIEELTQELEEMRASFGTEGLKQLQEFEAAIKQRDGIITQLTANLQQARREKDDTMVEFLELTEQSQKLQIQFQHLQANETLQNSTLSRTATDLLQAKRQIFTQQQQLQDYQKKEEDLQAQISFLQEKLRAFEMEKDRKIENLNAKEIQEKQALIDELNTRVVEEEKKTVELKNKVTTADELLGGLHEQLTQRNQEIQSLKLELGNSQQNERKCSEEIKELMRTVEELQKRNLKDSWLETSAVRRVEQETQRKLSHLQAELDEMYGKQIVQMKQELINQHMSQIEELKSQHKREMENTLKSDTNAAISKEQVNLMNAAINELNVRLQETHAQKEELKGELGVVLGEKSALQSQSNDLLEEVRFLREQVQKARQTIAEQENRLSEARKSLSTVEDLKAEIVAASESRKELELKHEAEITNYKIKLEMLEKEKNAVLDRMAESQEAELERLRTQPLFSHEEELSKLKEDLEVEHRINIEKLKDNLGIHYKQQIDGLQNEMNRKMESMQCETDNLITQQNQLILENSKLRDLQECLVNSKSEEMNLQINELQKEIEILKQEEKEKGTLEQEVQELQLKTEQLEKQLKEKEDDLQEKCAQLDAENNILKEEKRVLEDKLKMYSPSEQEERSIAVDPSTSKLADSRWQKEVAMLRKETEDLQQQCLYLNEEIEKQRNTFAFAEKNFEVNYQELQREYTCLLKIRDDLEATQTKQALEYESKLRALEEELLSKRGNPXAPKGKSSGIFPSETLEIGEVVEKDTTELMEKLEVTKREKLELSEKVSGLSEQLKQTHCTINSLSAEXRALKQEKEQLLLRCGELELLANPSGTENAAVCPVQMSSYQAGLVMGKVGDSGGSISKISKDLAEESKPMIEDKIPFKESGREQLLLPTRAQEPSHATVEPCESEKLQQELHALKAEQDDLRLQMEAQRICLFVVYSTHADQVRAHMEKEREEALCSLKDELISAQQKKIDELHKMHQCQLQNVKIQETGDEPLQVLIERLQKAVSEKCFHISKTLNNVFDECYTPLKCEMNIEEKENSGVYTSQNQSPELQEYRYEVQDFQESMQVLLGKVTEECRKLSGLQTRLGKIHEQQTDGVALEFAEQNAAEEEAGLLSGCSQSALQSTDVSLESKVSSLPASEKNRECERQVQELQSPVAAGQLQLTETEASHRAEIECLQQRLEAASEAPVQPSLSIDSVVFKGSGAQKPVYCGSCLREYVDGTAKFSDRFEVRQETNMVNLMEKQYQERLEEEIAKVIVSMSIAFAQQTELSRLSEGKENTIQSEQAHTLCSQNKHQLNDITSQSQVGLQTFEATDKBFKEEFKPLSKELGEYRKAVPLSSHDDLDDILKSEEHGLAISEEIFSKDETFIVRKSMHDEVLVSSMDTSRQLILNEQLEDMRQELVRQYEEHQQATEMLRQAHMQQMERQREDQEQLQEEIKRLNEQLTQKSSIDTEHVVSERERVLLEELEALKQLPLAGRKELCCELRHSSTQTQDGHDDQEVEEQTLKDKTLERSPEDALLDRNLSNERYALKKANNRLLKILLEVVKTTSAAEETIGRHVLGILDRSSKGQTASSLLWRSEADASATTCAPEDCARAMDESIPSYPGTAIATHDSIWSKVTEEGAELSQRLVRSGFAGPVIDPENEELMLNISSRLQAAVEKLLEAISETNTQLEHAKVTQTELMRESFRQKQEATESLHCLEELRERLQEESRAREQLAEELNKAESVIDGYSDEKTLFERQIQEKTDIIEHLEQEVLCMNNRLQELESDQRRVEEERQLLCRQREAMRAEAGPVEQQFLQETEKLMKEKLEVQCQAEKVRGDLQKQVKALEIDVEEQVSRFIELEQEKNAELTDLRQQSQALEKQLEKMRKFLDEQAIDREHERDVFQQEIQKLEHQLKAAPRIQPVSEHQAREVEQLTNHLKEKTDRCSELLLSKEQLQRDIQERNEEIEKLECRVRELEQALLASAEPFPKVEDQKRSGAVAADPELSLEVQLQAERDATDRKQKEITNLEEQLEQFREELENKNDEVQELLMQLEIQRKESTTRLQELQQENRLFKDEIEKLGFAMKESDSVSTRDQPMLFGKFAQLIQEKEIEIDRLNEQFIKLQQQLKLTTDNKVIEEQKEQIQDLETQIERLMSEREHEKKQREEEVEQLTGVVEKLQQEVVSTEQQREGARTLPEDEESFKHQLDKVTAEKLVLEQQVETTNQVMTHMNNVLKEINFKMDQITQSLCNLNKECASNEELPSLPKESVHMTVHELGSDNLQPEDAPAQDVTKPLEKQTSLTRLQESPEASRTQEIESLASSVGAKDVELTQCREQTETIQEQAQSETDRLQKKLTDLQRSLEKFAAALVSQVQMEAAQEYVPFHQEKQPVSSAPGSTDIQNANGLTGASTESLIPTVTLRLAEVESRVAEVHSGTMSEKLVGIVGGNASETEKRVIELQKLLEEAEERPEEGGEQSSRDGEVRESYMTSLQKDLGQVKDPLTEAKEKLSYSLEKEKRTGEQESREAPIPEPPSVEVGGCSGLTERTDKVSSSGNQTLQILLRDAAIQTDLQSESSQEEVRDTINQLTKKMEHIQELHAAEILDMESRHILETESLKKEHYVAIQLLTKECETLKEMTQCLRCKEGSSIPELADSVAYQSREVYSSDSESDWGQSQGFDTAIEGREEGETSADLFPKKIKGLVKAVHSEGMQVLSLSSPLCDDGEDRSIQQLSESWLKERQAYLNTISSLKDLISKMQVRRETEVYDRCHLSDWRGELLLACQRVFIKERSVLLATFQTELTSLSTRDVDGLLNSLEQRIQEQGIEYHTAMDCLQKADRRSLLAEIEDLRAQINGGKMTLEREQGTEKSSQELLDCSMQQKQSLEMQLELSSLRDRAAELQEQLSSEKMVVAELKSELAQAKLELGTTLKAQHKRLKELEAFRSEVKEKTDEIHFLSDTLAREQKNSLELQWALEKEKARSGHHEEREKEELEDLKFSLEDQKRRNTQLNLLLEQQKQLLNESQQKIESQKMLHDAQLSEEQGRNLGLQALLESEQVRIQEMKSTLDKERELYAQLQSREDGGQPPPALPSEDLLKELQKQLEEKHSRIVELLSETEKYKLDSLQTRQQMEKDRQVHQKTLQTEQEANTQGQKKMQELQSKVEELQRQLQEKRQQVYKLDLEGKRLQGLMQEFQKQELEPEEKPGSRGLVDQNLNEPATWNFTDDRTRNWVLQQKMGEAKDRNFTKLIEINGGELDHNHDLEMIRQTLQHVASKLQHVAQKACSRLQFETAGDDAFIWIQENIDGIILQLQKLTGQPGDEHSLGPPSSSCGSLTESLMRQNTELTRLINQLTEEKNTLRSIVIKLEELNRCYWHTGASRDCCSRFSFIDPADIEAIIASEKEVWNREKLSLQKALKRAEAKVYKLKAELRNDALLRNLGPDTDHAALQKIYNKYLRASSFRKALIYQKKYLLLLLGGFQECEDVTLGVLARMGGHLALKDSKTITNHPKAFSRFRSAVRVSIAISRMKFLVRRWQQVTSTSSININRDGFGLSPGIEKTDPFYHSPGGLELYGEPRHTMYRSRFDLDYPRSLLPLQNRYPGTPGDLNSISMASSQLHQYNPDKSLTDYVTRLEALRRRLGAIQSGSTTQFHFGMRR</sequence>
<accession>Q70FJ1</accession>
<accession>Q3TH74</accession>
<accession>Q80TR6</accession>
<comment type="function">
    <text evidence="3">Scaffolding protein that assembles several protein kinases and phosphatases on the centrosome and Golgi apparatus. Required to maintain the integrity of the Golgi apparatus. Required for microtubule nucleation at the cis-side of the Golgi apparatus. Required for association of the centrosomes with the poles of the bipolar mitotic spindle during metaphase. In complex with PDE4DIP isoform 2/MMG8/SMYLE, recruits CAMSAP2 to the Golgi apparatus and tethers non-centrosomal minus-end microtubules to the Golgi, an important step for polarized cell movement. In complex with PDE4DIP isoform 2, EB1/MAPRE1 and CDK5RAP2, contributes to microtubules nucleation and extension also from the centrosome to the cell periphery.</text>
</comment>
<comment type="subunit">
    <text evidence="3">Interacts with the regulatory region of protein kinase N (PKN), protein phosphatase 2A (PP2A), protein phosphatase 1 (PP1) and the immature non-phosphorylated form of PKC epsilon. Interacts with CIP4 and FNBP1. Interacts with chloride intracellular channel proteins CLIC1, CLIC4 and CLIC5. CSNK1D binding promotes its centrosomal subcellular location. Interacts with GM130/GOLGA2; leading to recruitment to the Golgi apparatus. Interacts with KCNQ1; targets protein kinase A (PKA) catalytic and regulatory subunits and protein phosphatase 1 (PP1), to the heterodimer KCNQ1-KCNE1. Interacts with PDE4DIP isoform 2; this interaction stabilizes both proteins. In complex with PDE4DIP isoform 2, recruits CAMSAP2 to the Golgi apparatus. Forms a pericentrosomal complex with CDK5RAP2, EB1/MAPRE1 and PDE4DIP isoform 2; within this complex, MAPRE1 binding to CDK5RAP2 may be mediated by PDE4DIP. Interacts with MAPRE1 and MAPRE3. Interacts (via C-terminus) with CAMSAP2; this interaction is much stronger in the presence of PDE4DIP isoform 2. Interacts with CAMSAP3. Interacts (via C-terminus) with the gamma-tubulin ring complex (gamma-TuRC), composed of gamma-tubulin, TUBGCP2, TUBGCP3, TUBGCP4, TUBGCP5 and TUBGCP6.</text>
</comment>
<comment type="subcellular location">
    <subcellularLocation>
        <location evidence="3">Golgi apparatus</location>
    </subcellularLocation>
    <subcellularLocation>
        <location evidence="3">Cytoplasm</location>
    </subcellularLocation>
    <subcellularLocation>
        <location evidence="3">Cytoplasm</location>
        <location evidence="3">Cytoskeleton</location>
        <location evidence="3">Microtubule organizing center</location>
        <location evidence="3">Centrosome</location>
    </subcellularLocation>
    <text evidence="3">Cytoplasmic in parietal cells. Recruited to the Golgi apparatus by GM130/GOLGA2. Localization at the centrosome versus Golgi apparatus may be cell type-dependent. Recruited to the centrosome in the presence of CDK5RAP2.</text>
</comment>
<comment type="alternative products">
    <event type="alternative splicing"/>
    <isoform>
        <id>Q70FJ1-1</id>
        <name>1</name>
        <sequence type="displayed"/>
    </isoform>
    <isoform>
        <id>Q70FJ1-2</id>
        <name>2</name>
        <sequence type="described" ref="VSP_039481"/>
    </isoform>
    <isoform>
        <id>Q70FJ1-3</id>
        <name>3</name>
        <sequence type="described" ref="VSP_039482"/>
    </isoform>
</comment>
<comment type="domain">
    <text evidence="2">RII-binding site, predicted to form an amphipathic helix, could participate in protein-protein interactions with a complementary surface on the R-subunit dimer.</text>
</comment>
<comment type="miscellaneous">
    <molecule>Isoform 2</molecule>
    <text evidence="8">Incomplete sequence.</text>
</comment>
<comment type="miscellaneous">
    <molecule>Isoform 3</molecule>
    <text evidence="8">Incomplete sequence.</text>
</comment>
<name>AKAP9_MOUSE</name>
<proteinExistence type="evidence at protein level"/>